<accession>P0DD78</accession>
<accession>Q79YK3</accession>
<accession>Q8K8Q1</accession>
<evidence type="ECO:0000255" key="1">
    <source>
        <dbReference type="HAMAP-Rule" id="MF_01498"/>
    </source>
</evidence>
<reference key="1">
    <citation type="journal article" date="2002" name="Proc. Natl. Acad. Sci. U.S.A.">
        <title>Genome sequence of a serotype M3 strain of group A Streptococcus: phage-encoded toxins, the high-virulence phenotype, and clone emergence.</title>
        <authorList>
            <person name="Beres S.B."/>
            <person name="Sylva G.L."/>
            <person name="Barbian K.D."/>
            <person name="Lei B."/>
            <person name="Hoff J.S."/>
            <person name="Mammarella N.D."/>
            <person name="Liu M.-Y."/>
            <person name="Smoot J.C."/>
            <person name="Porcella S.F."/>
            <person name="Parkins L.D."/>
            <person name="Campbell D.S."/>
            <person name="Smith T.M."/>
            <person name="McCormick J.K."/>
            <person name="Leung D.Y.M."/>
            <person name="Schlievert P.M."/>
            <person name="Musser J.M."/>
        </authorList>
    </citation>
    <scope>NUCLEOTIDE SEQUENCE [LARGE SCALE GENOMIC DNA]</scope>
    <source>
        <strain>ATCC BAA-595 / MGAS315</strain>
    </source>
</reference>
<proteinExistence type="inferred from homology"/>
<protein>
    <recommendedName>
        <fullName evidence="1">DNA repair protein RadA</fullName>
        <ecNumber evidence="1">3.6.4.-</ecNumber>
    </recommendedName>
    <alternativeName>
        <fullName evidence="1">Branch migration protein RadA</fullName>
    </alternativeName>
</protein>
<keyword id="KW-0067">ATP-binding</keyword>
<keyword id="KW-0227">DNA damage</keyword>
<keyword id="KW-0234">DNA repair</keyword>
<keyword id="KW-0238">DNA-binding</keyword>
<keyword id="KW-0378">Hydrolase</keyword>
<keyword id="KW-0479">Metal-binding</keyword>
<keyword id="KW-0547">Nucleotide-binding</keyword>
<keyword id="KW-0346">Stress response</keyword>
<keyword id="KW-0862">Zinc</keyword>
<keyword id="KW-0863">Zinc-finger</keyword>
<gene>
    <name evidence="1" type="primary">radA</name>
    <name type="ordered locus">SpyM3_0167</name>
</gene>
<organism>
    <name type="scientific">Streptococcus pyogenes serotype M3 (strain ATCC BAA-595 / MGAS315)</name>
    <dbReference type="NCBI Taxonomy" id="198466"/>
    <lineage>
        <taxon>Bacteria</taxon>
        <taxon>Bacillati</taxon>
        <taxon>Bacillota</taxon>
        <taxon>Bacilli</taxon>
        <taxon>Lactobacillales</taxon>
        <taxon>Streptococcaceae</taxon>
        <taxon>Streptococcus</taxon>
    </lineage>
</organism>
<name>RADA_STRP3</name>
<dbReference type="EC" id="3.6.4.-" evidence="1"/>
<dbReference type="EMBL" id="AE014074">
    <property type="protein sequence ID" value="AAM78774.1"/>
    <property type="molecule type" value="Genomic_DNA"/>
</dbReference>
<dbReference type="RefSeq" id="WP_011054159.1">
    <property type="nucleotide sequence ID" value="NC_004070.1"/>
</dbReference>
<dbReference type="SMR" id="P0DD78"/>
<dbReference type="MEROPS" id="S16.A04"/>
<dbReference type="KEGG" id="spg:SpyM3_0167"/>
<dbReference type="HOGENOM" id="CLU_018264_0_1_9"/>
<dbReference type="Proteomes" id="UP000000564">
    <property type="component" value="Chromosome"/>
</dbReference>
<dbReference type="GO" id="GO:0005829">
    <property type="term" value="C:cytosol"/>
    <property type="evidence" value="ECO:0007669"/>
    <property type="project" value="TreeGrafter"/>
</dbReference>
<dbReference type="GO" id="GO:0005524">
    <property type="term" value="F:ATP binding"/>
    <property type="evidence" value="ECO:0007669"/>
    <property type="project" value="UniProtKB-UniRule"/>
</dbReference>
<dbReference type="GO" id="GO:0016887">
    <property type="term" value="F:ATP hydrolysis activity"/>
    <property type="evidence" value="ECO:0007669"/>
    <property type="project" value="InterPro"/>
</dbReference>
<dbReference type="GO" id="GO:0140664">
    <property type="term" value="F:ATP-dependent DNA damage sensor activity"/>
    <property type="evidence" value="ECO:0007669"/>
    <property type="project" value="InterPro"/>
</dbReference>
<dbReference type="GO" id="GO:0003684">
    <property type="term" value="F:damaged DNA binding"/>
    <property type="evidence" value="ECO:0007669"/>
    <property type="project" value="InterPro"/>
</dbReference>
<dbReference type="GO" id="GO:0008270">
    <property type="term" value="F:zinc ion binding"/>
    <property type="evidence" value="ECO:0007669"/>
    <property type="project" value="UniProtKB-KW"/>
</dbReference>
<dbReference type="GO" id="GO:0000725">
    <property type="term" value="P:recombinational repair"/>
    <property type="evidence" value="ECO:0007669"/>
    <property type="project" value="UniProtKB-UniRule"/>
</dbReference>
<dbReference type="CDD" id="cd01121">
    <property type="entry name" value="RadA_SMS_N"/>
    <property type="match status" value="1"/>
</dbReference>
<dbReference type="FunFam" id="3.30.230.10:FF:000031">
    <property type="entry name" value="DNA repair protein RadA"/>
    <property type="match status" value="1"/>
</dbReference>
<dbReference type="FunFam" id="3.40.50.300:FF:000050">
    <property type="entry name" value="DNA repair protein RadA"/>
    <property type="match status" value="1"/>
</dbReference>
<dbReference type="Gene3D" id="3.30.230.10">
    <property type="match status" value="1"/>
</dbReference>
<dbReference type="Gene3D" id="3.40.50.300">
    <property type="entry name" value="P-loop containing nucleotide triphosphate hydrolases"/>
    <property type="match status" value="1"/>
</dbReference>
<dbReference type="HAMAP" id="MF_01498">
    <property type="entry name" value="RadA_bact"/>
    <property type="match status" value="1"/>
</dbReference>
<dbReference type="InterPro" id="IPR003593">
    <property type="entry name" value="AAA+_ATPase"/>
</dbReference>
<dbReference type="InterPro" id="IPR004504">
    <property type="entry name" value="DNA_repair_RadA"/>
</dbReference>
<dbReference type="InterPro" id="IPR027417">
    <property type="entry name" value="P-loop_NTPase"/>
</dbReference>
<dbReference type="InterPro" id="IPR020588">
    <property type="entry name" value="RecA_ATP-bd"/>
</dbReference>
<dbReference type="InterPro" id="IPR020568">
    <property type="entry name" value="Ribosomal_Su5_D2-typ_SF"/>
</dbReference>
<dbReference type="InterPro" id="IPR014721">
    <property type="entry name" value="Ribsml_uS5_D2-typ_fold_subgr"/>
</dbReference>
<dbReference type="InterPro" id="IPR041166">
    <property type="entry name" value="Rubredoxin_2"/>
</dbReference>
<dbReference type="NCBIfam" id="TIGR00416">
    <property type="entry name" value="sms"/>
    <property type="match status" value="1"/>
</dbReference>
<dbReference type="PANTHER" id="PTHR32472">
    <property type="entry name" value="DNA REPAIR PROTEIN RADA"/>
    <property type="match status" value="1"/>
</dbReference>
<dbReference type="PANTHER" id="PTHR32472:SF10">
    <property type="entry name" value="DNA REPAIR PROTEIN RADA-LIKE PROTEIN"/>
    <property type="match status" value="1"/>
</dbReference>
<dbReference type="Pfam" id="PF13481">
    <property type="entry name" value="AAA_25"/>
    <property type="match status" value="1"/>
</dbReference>
<dbReference type="Pfam" id="PF13541">
    <property type="entry name" value="ChlI"/>
    <property type="match status" value="1"/>
</dbReference>
<dbReference type="Pfam" id="PF18073">
    <property type="entry name" value="Zn_ribbon_LapB"/>
    <property type="match status" value="1"/>
</dbReference>
<dbReference type="PRINTS" id="PR01874">
    <property type="entry name" value="DNAREPAIRADA"/>
</dbReference>
<dbReference type="SMART" id="SM00382">
    <property type="entry name" value="AAA"/>
    <property type="match status" value="1"/>
</dbReference>
<dbReference type="SUPFAM" id="SSF52540">
    <property type="entry name" value="P-loop containing nucleoside triphosphate hydrolases"/>
    <property type="match status" value="1"/>
</dbReference>
<dbReference type="SUPFAM" id="SSF54211">
    <property type="entry name" value="Ribosomal protein S5 domain 2-like"/>
    <property type="match status" value="1"/>
</dbReference>
<dbReference type="PROSITE" id="PS50162">
    <property type="entry name" value="RECA_2"/>
    <property type="match status" value="1"/>
</dbReference>
<comment type="function">
    <text evidence="1">DNA-dependent ATPase involved in processing of recombination intermediates, plays a role in repairing DNA breaks. Stimulates the branch migration of RecA-mediated strand transfer reactions, allowing the 3' invading strand to extend heteroduplex DNA faster. Binds ssDNA in the presence of ADP but not other nucleotides, has ATPase activity that is stimulated by ssDNA and various branched DNA structures, but inhibited by SSB. Does not have RecA's homology-searching function.</text>
</comment>
<comment type="domain">
    <text evidence="1">Has a putative N-terminal zinc-finger, a middle region with homology to RecA with ATPase motifs including the RadA KNRFG motif, while the C-terminus is homologous to Lon protease.</text>
</comment>
<comment type="similarity">
    <text evidence="1">Belongs to the RecA family. RadA subfamily.</text>
</comment>
<feature type="chain" id="PRO_0000187939" description="DNA repair protein RadA">
    <location>
        <begin position="1"/>
        <end position="453"/>
    </location>
</feature>
<feature type="zinc finger region" description="C4-type" evidence="1">
    <location>
        <begin position="10"/>
        <end position="27"/>
    </location>
</feature>
<feature type="region of interest" description="Lon-protease-like" evidence="1">
    <location>
        <begin position="350"/>
        <end position="453"/>
    </location>
</feature>
<feature type="short sequence motif" description="RadA KNRFG motif" evidence="1">
    <location>
        <begin position="251"/>
        <end position="255"/>
    </location>
</feature>
<feature type="binding site" evidence="1">
    <location>
        <begin position="95"/>
        <end position="102"/>
    </location>
    <ligand>
        <name>ATP</name>
        <dbReference type="ChEBI" id="CHEBI:30616"/>
    </ligand>
</feature>
<sequence length="453" mass="49349">MAKKKATFICQECGYQSPKYLGRCPNCSAWSSFVEEVEVKEVKNARVSLAGEKSRPVKLKDVDNISYHRTQTDMSEFNRVLGGGVVPGSLILIGGDPGIGKSTLLLQVSTQLANKGTVLYASGEESAEQIKLRSERLGDIDNEFYLYAETNMQAIRTEIENIKPDFLIIDSIQTIMSPDITGVQGSVSQVREVTAELMQLAKTNNIATFIVGHVTKEGTLAGPRMLEHMVDTVLYFEGERHHTFRILRAVKNRFGSTNEIGIFEMQSGGLVEVLNPSQVFLEERLDGATGSAVVVTMEGSRPILAEVQSLVTPTVFGNARRTTTGLDFNRVSLIMAVLEKRCGLLLQNQDAYLKSAGGVKLDEPAIDLAVAVAIASSYKEKPTSPQEAFLGEIGLTGEIRRVTRIEQRINEAAKLGFTKVYAPKNALQGIDISQGIEVVGVTTVGQVLKAVFS</sequence>